<comment type="function">
    <text evidence="2 3">Part of the ESX-5 specialized secretion system, which is responsible for the secretion of EsxN and a number of PE_PGRS and PPE proteins, including PPE41 (By similarity). EccA5 exhibits ATPase activity and may provide energy for the export of ESX-5 substrates (By similarity).</text>
</comment>
<comment type="subunit">
    <text evidence="2">Part of the ESX-5 / type VII secretion system (T7SS), which is composed of cytosolic and membrane components.</text>
</comment>
<comment type="subcellular location">
    <subcellularLocation>
        <location evidence="1">Cytoplasm</location>
    </subcellularLocation>
</comment>
<comment type="similarity">
    <text evidence="5">Belongs to the CbxX/CfxQ family.</text>
</comment>
<reference key="1">
    <citation type="journal article" date="2002" name="J. Bacteriol.">
        <title>Whole-genome comparison of Mycobacterium tuberculosis clinical and laboratory strains.</title>
        <authorList>
            <person name="Fleischmann R.D."/>
            <person name="Alland D."/>
            <person name="Eisen J.A."/>
            <person name="Carpenter L."/>
            <person name="White O."/>
            <person name="Peterson J.D."/>
            <person name="DeBoy R.T."/>
            <person name="Dodson R.J."/>
            <person name="Gwinn M.L."/>
            <person name="Haft D.H."/>
            <person name="Hickey E.K."/>
            <person name="Kolonay J.F."/>
            <person name="Nelson W.C."/>
            <person name="Umayam L.A."/>
            <person name="Ermolaeva M.D."/>
            <person name="Salzberg S.L."/>
            <person name="Delcher A."/>
            <person name="Utterback T.R."/>
            <person name="Weidman J.F."/>
            <person name="Khouri H.M."/>
            <person name="Gill J."/>
            <person name="Mikula A."/>
            <person name="Bishai W."/>
            <person name="Jacobs W.R. Jr."/>
            <person name="Venter J.C."/>
            <person name="Fraser C.M."/>
        </authorList>
    </citation>
    <scope>NUCLEOTIDE SEQUENCE [LARGE SCALE GENOMIC DNA]</scope>
    <source>
        <strain>CDC 1551 / Oshkosh</strain>
    </source>
</reference>
<keyword id="KW-0067">ATP-binding</keyword>
<keyword id="KW-0963">Cytoplasm</keyword>
<keyword id="KW-0547">Nucleotide-binding</keyword>
<keyword id="KW-1185">Reference proteome</keyword>
<evidence type="ECO:0000250" key="1">
    <source>
        <dbReference type="UniProtKB" id="B2HSU9"/>
    </source>
</evidence>
<evidence type="ECO:0000250" key="2">
    <source>
        <dbReference type="UniProtKB" id="P9WPH9"/>
    </source>
</evidence>
<evidence type="ECO:0000250" key="3">
    <source>
        <dbReference type="UniProtKB" id="P9WPI1"/>
    </source>
</evidence>
<evidence type="ECO:0000255" key="4"/>
<evidence type="ECO:0000305" key="5"/>
<name>ECCA5_MYCTO</name>
<organism>
    <name type="scientific">Mycobacterium tuberculosis (strain CDC 1551 / Oshkosh)</name>
    <dbReference type="NCBI Taxonomy" id="83331"/>
    <lineage>
        <taxon>Bacteria</taxon>
        <taxon>Bacillati</taxon>
        <taxon>Actinomycetota</taxon>
        <taxon>Actinomycetes</taxon>
        <taxon>Mycobacteriales</taxon>
        <taxon>Mycobacteriaceae</taxon>
        <taxon>Mycobacterium</taxon>
        <taxon>Mycobacterium tuberculosis complex</taxon>
    </lineage>
</organism>
<feature type="chain" id="PRO_0000426948" description="ESX-5 secretion system protein EccA5">
    <location>
        <begin position="1"/>
        <end position="610"/>
    </location>
</feature>
<feature type="binding site" evidence="4">
    <location>
        <begin position="357"/>
        <end position="364"/>
    </location>
    <ligand>
        <name>ATP</name>
        <dbReference type="ChEBI" id="CHEBI:30616"/>
    </ligand>
</feature>
<protein>
    <recommendedName>
        <fullName evidence="3">ESX-5 secretion system protein EccA5</fullName>
    </recommendedName>
    <alternativeName>
        <fullName evidence="3">ESX conserved component A5</fullName>
    </alternativeName>
    <alternativeName>
        <fullName evidence="3">Type VII secretion system protein EccA5</fullName>
        <shortName evidence="3">T7SS protein EccA5</shortName>
    </alternativeName>
</protein>
<accession>P9WPI0</accession>
<accession>L0TAM8</accession>
<accession>O53947</accession>
<accession>P63744</accession>
<dbReference type="EMBL" id="AE000516">
    <property type="protein sequence ID" value="AAK46118.1"/>
    <property type="molecule type" value="Genomic_DNA"/>
</dbReference>
<dbReference type="PIR" id="G70930">
    <property type="entry name" value="G70930"/>
</dbReference>
<dbReference type="RefSeq" id="WP_003408868.1">
    <property type="nucleotide sequence ID" value="NZ_KK341227.1"/>
</dbReference>
<dbReference type="SMR" id="P9WPI0"/>
<dbReference type="GeneID" id="45425775"/>
<dbReference type="KEGG" id="mtc:MT1847"/>
<dbReference type="PATRIC" id="fig|83331.31.peg.1989"/>
<dbReference type="HOGENOM" id="CLU_008749_5_0_11"/>
<dbReference type="Proteomes" id="UP000001020">
    <property type="component" value="Chromosome"/>
</dbReference>
<dbReference type="GO" id="GO:0005737">
    <property type="term" value="C:cytoplasm"/>
    <property type="evidence" value="ECO:0007669"/>
    <property type="project" value="UniProtKB-SubCell"/>
</dbReference>
<dbReference type="GO" id="GO:0005524">
    <property type="term" value="F:ATP binding"/>
    <property type="evidence" value="ECO:0007669"/>
    <property type="project" value="UniProtKB-KW"/>
</dbReference>
<dbReference type="GO" id="GO:0016887">
    <property type="term" value="F:ATP hydrolysis activity"/>
    <property type="evidence" value="ECO:0007669"/>
    <property type="project" value="InterPro"/>
</dbReference>
<dbReference type="FunFam" id="1.10.8.60:FF:000168">
    <property type="entry name" value="ESX-5 type VII secretion system protein EccA"/>
    <property type="match status" value="1"/>
</dbReference>
<dbReference type="FunFam" id="1.25.40.10:FF:000424">
    <property type="entry name" value="Type VII secretion AAA-ATPase EccA"/>
    <property type="match status" value="1"/>
</dbReference>
<dbReference type="FunFam" id="3.40.50.300:FF:001169">
    <property type="entry name" value="Type VII secretion AAA-ATPase EccA"/>
    <property type="match status" value="1"/>
</dbReference>
<dbReference type="Gene3D" id="1.10.8.60">
    <property type="match status" value="1"/>
</dbReference>
<dbReference type="Gene3D" id="3.40.50.300">
    <property type="entry name" value="P-loop containing nucleotide triphosphate hydrolases"/>
    <property type="match status" value="1"/>
</dbReference>
<dbReference type="Gene3D" id="1.25.40.10">
    <property type="entry name" value="Tetratricopeptide repeat domain"/>
    <property type="match status" value="1"/>
</dbReference>
<dbReference type="InterPro" id="IPR003593">
    <property type="entry name" value="AAA+_ATPase"/>
</dbReference>
<dbReference type="InterPro" id="IPR003959">
    <property type="entry name" value="ATPase_AAA_core"/>
</dbReference>
<dbReference type="InterPro" id="IPR000641">
    <property type="entry name" value="CbxX/CfxQ"/>
</dbReference>
<dbReference type="InterPro" id="IPR050773">
    <property type="entry name" value="CbxX/CfxQ_RuBisCO_ESX"/>
</dbReference>
<dbReference type="InterPro" id="IPR027417">
    <property type="entry name" value="P-loop_NTPase"/>
</dbReference>
<dbReference type="InterPro" id="IPR023835">
    <property type="entry name" value="T7SS_EccA"/>
</dbReference>
<dbReference type="InterPro" id="IPR049078">
    <property type="entry name" value="T7SS_EccA1-like_N"/>
</dbReference>
<dbReference type="InterPro" id="IPR011990">
    <property type="entry name" value="TPR-like_helical_dom_sf"/>
</dbReference>
<dbReference type="NCBIfam" id="TIGR03922">
    <property type="entry name" value="T7SS_EccA"/>
    <property type="match status" value="1"/>
</dbReference>
<dbReference type="PANTHER" id="PTHR43392">
    <property type="entry name" value="AAA-TYPE ATPASE FAMILY PROTEIN / ANKYRIN REPEAT FAMILY PROTEIN"/>
    <property type="match status" value="1"/>
</dbReference>
<dbReference type="PANTHER" id="PTHR43392:SF2">
    <property type="entry name" value="AAA-TYPE ATPASE FAMILY PROTEIN _ ANKYRIN REPEAT FAMILY PROTEIN"/>
    <property type="match status" value="1"/>
</dbReference>
<dbReference type="Pfam" id="PF00004">
    <property type="entry name" value="AAA"/>
    <property type="match status" value="1"/>
</dbReference>
<dbReference type="Pfam" id="PF21545">
    <property type="entry name" value="T7SS_EccA1_N"/>
    <property type="match status" value="1"/>
</dbReference>
<dbReference type="PRINTS" id="PR00819">
    <property type="entry name" value="CBXCFQXSUPER"/>
</dbReference>
<dbReference type="SMART" id="SM00382">
    <property type="entry name" value="AAA"/>
    <property type="match status" value="1"/>
</dbReference>
<dbReference type="SUPFAM" id="SSF52540">
    <property type="entry name" value="P-loop containing nucleoside triphosphate hydrolases"/>
    <property type="match status" value="1"/>
</dbReference>
<dbReference type="SUPFAM" id="SSF48452">
    <property type="entry name" value="TPR-like"/>
    <property type="match status" value="1"/>
</dbReference>
<sequence length="610" mass="67756">MTRPQAAAEDARNAMVAGLLASGISVNGLQPSHNPQVAAQMFTTATRLDPKMCDAWLARLLAGDQSIEVLAGAWAAVRTFGWETRRLGVTDLQFRPEVSDGLFLRLAITSVDSLACAYAAVLAEAKRYQEAAELLDATDPRHPFDAELVSYVRGVLYFRTKRWPDVLAQFPEATQWRHPELKAAGAAMATTALASLGVFEEAFRRAQEAIEGDRVPGAANIALYTQGMCLRHVGREEEAVELLRRVYSRDAKFTPAREALDNPNFRLILTDPETIEARTDPWDPDSAPTRAQTEAARHAEMAAKYLAEGDAELNAMLGMEQAKKEIKLIKSTTKVNLARAKMGLPVPVTSRHTLLLGPPGTGKTSVARAFTKQLCGLTVLRKPLVVETSRTKLLGRYMADAEKNTEEMLEGALGGAVFFDEMHTLHEKGYSQGDPYGNAIINTLLLYMENHRDELVVFGAGYAKAMEKMLEVNQGLRRRFSTVIEFFSYTPQELIALTQLMGRENEDVITEEESQVLLPSYTKFYMEQSYSEDGDLIRGIDLLGNAGFVRNVVEKARDHRSFRLDDEDLDAVLASDLTEFSEDQLRRFKELTREDLAEGLRAAVAEKKTK</sequence>
<gene>
    <name evidence="3" type="primary">eccA5</name>
    <name type="ordered locus">MT1847</name>
</gene>
<proteinExistence type="inferred from homology"/>